<name>MURG_SHEPA</name>
<feature type="chain" id="PRO_1000074471" description="UDP-N-acetylglucosamine--N-acetylmuramyl-(pentapeptide) pyrophosphoryl-undecaprenol N-acetylglucosamine transferase">
    <location>
        <begin position="1"/>
        <end position="365"/>
    </location>
</feature>
<feature type="binding site" evidence="1">
    <location>
        <begin position="17"/>
        <end position="19"/>
    </location>
    <ligand>
        <name>UDP-N-acetyl-alpha-D-glucosamine</name>
        <dbReference type="ChEBI" id="CHEBI:57705"/>
    </ligand>
</feature>
<feature type="binding site" evidence="1">
    <location>
        <position position="129"/>
    </location>
    <ligand>
        <name>UDP-N-acetyl-alpha-D-glucosamine</name>
        <dbReference type="ChEBI" id="CHEBI:57705"/>
    </ligand>
</feature>
<feature type="binding site" evidence="1">
    <location>
        <position position="167"/>
    </location>
    <ligand>
        <name>UDP-N-acetyl-alpha-D-glucosamine</name>
        <dbReference type="ChEBI" id="CHEBI:57705"/>
    </ligand>
</feature>
<feature type="binding site" evidence="1">
    <location>
        <position position="194"/>
    </location>
    <ligand>
        <name>UDP-N-acetyl-alpha-D-glucosamine</name>
        <dbReference type="ChEBI" id="CHEBI:57705"/>
    </ligand>
</feature>
<feature type="binding site" evidence="1">
    <location>
        <position position="250"/>
    </location>
    <ligand>
        <name>UDP-N-acetyl-alpha-D-glucosamine</name>
        <dbReference type="ChEBI" id="CHEBI:57705"/>
    </ligand>
</feature>
<feature type="binding site" evidence="1">
    <location>
        <begin position="269"/>
        <end position="274"/>
    </location>
    <ligand>
        <name>UDP-N-acetyl-alpha-D-glucosamine</name>
        <dbReference type="ChEBI" id="CHEBI:57705"/>
    </ligand>
</feature>
<feature type="binding site" evidence="1">
    <location>
        <position position="295"/>
    </location>
    <ligand>
        <name>UDP-N-acetyl-alpha-D-glucosamine</name>
        <dbReference type="ChEBI" id="CHEBI:57705"/>
    </ligand>
</feature>
<sequence length="365" mass="39263">MTNQAEEKRILIMAGGTGGHVFPALAVAKYLSQQGWKVRWLGTAERMEARLVPQHGFDIDFIDIKGVRGNGLMRKLAAPFKILRSVMQARAVIKSFKPDVVMGMGGFASGPGGVAAKLSGIPLVLHEQNAIPGMTNRLLSRIASEVLCAFEGTFTDIKAETVGNPIRKELIALGDKRESCCDDDSLKVLVVGGSLGAKIFNDVMPSVLEGVSKTHSMTVWHQVGRDNLVAVKAEYQRLGQDGSVSVAEFIDDMEAAYRWADVVVCRSGALTVSELAAVGLPSLLVPYPHAVDDHQTKNAKVLVNAGAAFLLPQPIVDTSKLMTKLSMLASDKQELCNMGQRARDVAILDATERVANVCIRLAEKG</sequence>
<reference key="1">
    <citation type="submission" date="2007-10" db="EMBL/GenBank/DDBJ databases">
        <title>Complete sequence of Shewanella pealeana ATCC 700345.</title>
        <authorList>
            <consortium name="US DOE Joint Genome Institute"/>
            <person name="Copeland A."/>
            <person name="Lucas S."/>
            <person name="Lapidus A."/>
            <person name="Barry K."/>
            <person name="Glavina del Rio T."/>
            <person name="Dalin E."/>
            <person name="Tice H."/>
            <person name="Pitluck S."/>
            <person name="Chertkov O."/>
            <person name="Brettin T."/>
            <person name="Bruce D."/>
            <person name="Detter J.C."/>
            <person name="Han C."/>
            <person name="Schmutz J."/>
            <person name="Larimer F."/>
            <person name="Land M."/>
            <person name="Hauser L."/>
            <person name="Kyrpides N."/>
            <person name="Kim E."/>
            <person name="Zhao J.-S.Z."/>
            <person name="Manno D."/>
            <person name="Hawari J."/>
            <person name="Richardson P."/>
        </authorList>
    </citation>
    <scope>NUCLEOTIDE SEQUENCE [LARGE SCALE GENOMIC DNA]</scope>
    <source>
        <strain>ATCC 700345 / ANG-SQ1</strain>
    </source>
</reference>
<comment type="function">
    <text evidence="1">Cell wall formation. Catalyzes the transfer of a GlcNAc subunit on undecaprenyl-pyrophosphoryl-MurNAc-pentapeptide (lipid intermediate I) to form undecaprenyl-pyrophosphoryl-MurNAc-(pentapeptide)GlcNAc (lipid intermediate II).</text>
</comment>
<comment type="catalytic activity">
    <reaction evidence="1">
        <text>di-trans,octa-cis-undecaprenyl diphospho-N-acetyl-alpha-D-muramoyl-L-alanyl-D-glutamyl-meso-2,6-diaminopimeloyl-D-alanyl-D-alanine + UDP-N-acetyl-alpha-D-glucosamine = di-trans,octa-cis-undecaprenyl diphospho-[N-acetyl-alpha-D-glucosaminyl-(1-&gt;4)]-N-acetyl-alpha-D-muramoyl-L-alanyl-D-glutamyl-meso-2,6-diaminopimeloyl-D-alanyl-D-alanine + UDP + H(+)</text>
        <dbReference type="Rhea" id="RHEA:31227"/>
        <dbReference type="ChEBI" id="CHEBI:15378"/>
        <dbReference type="ChEBI" id="CHEBI:57705"/>
        <dbReference type="ChEBI" id="CHEBI:58223"/>
        <dbReference type="ChEBI" id="CHEBI:61387"/>
        <dbReference type="ChEBI" id="CHEBI:61388"/>
        <dbReference type="EC" id="2.4.1.227"/>
    </reaction>
</comment>
<comment type="pathway">
    <text evidence="1">Cell wall biogenesis; peptidoglycan biosynthesis.</text>
</comment>
<comment type="subcellular location">
    <subcellularLocation>
        <location evidence="1">Cell inner membrane</location>
        <topology evidence="1">Peripheral membrane protein</topology>
        <orientation evidence="1">Cytoplasmic side</orientation>
    </subcellularLocation>
</comment>
<comment type="similarity">
    <text evidence="1">Belongs to the glycosyltransferase 28 family. MurG subfamily.</text>
</comment>
<organism>
    <name type="scientific">Shewanella pealeana (strain ATCC 700345 / ANG-SQ1)</name>
    <dbReference type="NCBI Taxonomy" id="398579"/>
    <lineage>
        <taxon>Bacteria</taxon>
        <taxon>Pseudomonadati</taxon>
        <taxon>Pseudomonadota</taxon>
        <taxon>Gammaproteobacteria</taxon>
        <taxon>Alteromonadales</taxon>
        <taxon>Shewanellaceae</taxon>
        <taxon>Shewanella</taxon>
    </lineage>
</organism>
<proteinExistence type="inferred from homology"/>
<keyword id="KW-0131">Cell cycle</keyword>
<keyword id="KW-0132">Cell division</keyword>
<keyword id="KW-0997">Cell inner membrane</keyword>
<keyword id="KW-1003">Cell membrane</keyword>
<keyword id="KW-0133">Cell shape</keyword>
<keyword id="KW-0961">Cell wall biogenesis/degradation</keyword>
<keyword id="KW-0328">Glycosyltransferase</keyword>
<keyword id="KW-0472">Membrane</keyword>
<keyword id="KW-0573">Peptidoglycan synthesis</keyword>
<keyword id="KW-1185">Reference proteome</keyword>
<keyword id="KW-0808">Transferase</keyword>
<dbReference type="EC" id="2.4.1.227" evidence="1"/>
<dbReference type="EMBL" id="CP000851">
    <property type="protein sequence ID" value="ABV89121.1"/>
    <property type="molecule type" value="Genomic_DNA"/>
</dbReference>
<dbReference type="RefSeq" id="WP_012157003.1">
    <property type="nucleotide sequence ID" value="NC_009901.1"/>
</dbReference>
<dbReference type="SMR" id="A8H984"/>
<dbReference type="STRING" id="398579.Spea_3811"/>
<dbReference type="CAZy" id="GT28">
    <property type="family name" value="Glycosyltransferase Family 28"/>
</dbReference>
<dbReference type="KEGG" id="spl:Spea_3811"/>
<dbReference type="eggNOG" id="COG0707">
    <property type="taxonomic scope" value="Bacteria"/>
</dbReference>
<dbReference type="HOGENOM" id="CLU_037404_2_0_6"/>
<dbReference type="OrthoDB" id="9808936at2"/>
<dbReference type="UniPathway" id="UPA00219"/>
<dbReference type="Proteomes" id="UP000002608">
    <property type="component" value="Chromosome"/>
</dbReference>
<dbReference type="GO" id="GO:0005886">
    <property type="term" value="C:plasma membrane"/>
    <property type="evidence" value="ECO:0007669"/>
    <property type="project" value="UniProtKB-SubCell"/>
</dbReference>
<dbReference type="GO" id="GO:0051991">
    <property type="term" value="F:UDP-N-acetyl-D-glucosamine:N-acetylmuramoyl-L-alanyl-D-glutamyl-meso-2,6-diaminopimelyl-D-alanyl-D-alanine-diphosphoundecaprenol 4-beta-N-acetylglucosaminlytransferase activity"/>
    <property type="evidence" value="ECO:0007669"/>
    <property type="project" value="RHEA"/>
</dbReference>
<dbReference type="GO" id="GO:0050511">
    <property type="term" value="F:undecaprenyldiphospho-muramoylpentapeptide beta-N-acetylglucosaminyltransferase activity"/>
    <property type="evidence" value="ECO:0007669"/>
    <property type="project" value="UniProtKB-UniRule"/>
</dbReference>
<dbReference type="GO" id="GO:0005975">
    <property type="term" value="P:carbohydrate metabolic process"/>
    <property type="evidence" value="ECO:0007669"/>
    <property type="project" value="InterPro"/>
</dbReference>
<dbReference type="GO" id="GO:0051301">
    <property type="term" value="P:cell division"/>
    <property type="evidence" value="ECO:0007669"/>
    <property type="project" value="UniProtKB-KW"/>
</dbReference>
<dbReference type="GO" id="GO:0071555">
    <property type="term" value="P:cell wall organization"/>
    <property type="evidence" value="ECO:0007669"/>
    <property type="project" value="UniProtKB-KW"/>
</dbReference>
<dbReference type="GO" id="GO:0030259">
    <property type="term" value="P:lipid glycosylation"/>
    <property type="evidence" value="ECO:0007669"/>
    <property type="project" value="UniProtKB-UniRule"/>
</dbReference>
<dbReference type="GO" id="GO:0009252">
    <property type="term" value="P:peptidoglycan biosynthetic process"/>
    <property type="evidence" value="ECO:0007669"/>
    <property type="project" value="UniProtKB-UniRule"/>
</dbReference>
<dbReference type="GO" id="GO:0008360">
    <property type="term" value="P:regulation of cell shape"/>
    <property type="evidence" value="ECO:0007669"/>
    <property type="project" value="UniProtKB-KW"/>
</dbReference>
<dbReference type="CDD" id="cd03785">
    <property type="entry name" value="GT28_MurG"/>
    <property type="match status" value="1"/>
</dbReference>
<dbReference type="Gene3D" id="3.40.50.2000">
    <property type="entry name" value="Glycogen Phosphorylase B"/>
    <property type="match status" value="2"/>
</dbReference>
<dbReference type="HAMAP" id="MF_00033">
    <property type="entry name" value="MurG"/>
    <property type="match status" value="1"/>
</dbReference>
<dbReference type="InterPro" id="IPR006009">
    <property type="entry name" value="GlcNAc_MurG"/>
</dbReference>
<dbReference type="InterPro" id="IPR007235">
    <property type="entry name" value="Glyco_trans_28_C"/>
</dbReference>
<dbReference type="InterPro" id="IPR004276">
    <property type="entry name" value="GlycoTrans_28_N"/>
</dbReference>
<dbReference type="NCBIfam" id="TIGR01133">
    <property type="entry name" value="murG"/>
    <property type="match status" value="1"/>
</dbReference>
<dbReference type="PANTHER" id="PTHR21015:SF22">
    <property type="entry name" value="GLYCOSYLTRANSFERASE"/>
    <property type="match status" value="1"/>
</dbReference>
<dbReference type="PANTHER" id="PTHR21015">
    <property type="entry name" value="UDP-N-ACETYLGLUCOSAMINE--N-ACETYLMURAMYL-(PENTAPEPTIDE) PYROPHOSPHORYL-UNDECAPRENOL N-ACETYLGLUCOSAMINE TRANSFERASE 1"/>
    <property type="match status" value="1"/>
</dbReference>
<dbReference type="Pfam" id="PF04101">
    <property type="entry name" value="Glyco_tran_28_C"/>
    <property type="match status" value="1"/>
</dbReference>
<dbReference type="Pfam" id="PF03033">
    <property type="entry name" value="Glyco_transf_28"/>
    <property type="match status" value="1"/>
</dbReference>
<dbReference type="SUPFAM" id="SSF53756">
    <property type="entry name" value="UDP-Glycosyltransferase/glycogen phosphorylase"/>
    <property type="match status" value="1"/>
</dbReference>
<gene>
    <name evidence="1" type="primary">murG</name>
    <name type="ordered locus">Spea_3811</name>
</gene>
<evidence type="ECO:0000255" key="1">
    <source>
        <dbReference type="HAMAP-Rule" id="MF_00033"/>
    </source>
</evidence>
<protein>
    <recommendedName>
        <fullName evidence="1">UDP-N-acetylglucosamine--N-acetylmuramyl-(pentapeptide) pyrophosphoryl-undecaprenol N-acetylglucosamine transferase</fullName>
        <ecNumber evidence="1">2.4.1.227</ecNumber>
    </recommendedName>
    <alternativeName>
        <fullName evidence="1">Undecaprenyl-PP-MurNAc-pentapeptide-UDPGlcNAc GlcNAc transferase</fullName>
    </alternativeName>
</protein>
<accession>A8H984</accession>